<evidence type="ECO:0000250" key="1">
    <source>
        <dbReference type="UniProtKB" id="Q04837"/>
    </source>
</evidence>
<evidence type="ECO:0000269" key="2">
    <source>
    </source>
</evidence>
<evidence type="ECO:0000269" key="3">
    <source>
    </source>
</evidence>
<evidence type="ECO:0000269" key="4">
    <source>
    </source>
</evidence>
<evidence type="ECO:0000303" key="5">
    <source ref="3"/>
</evidence>
<evidence type="ECO:0000305" key="6"/>
<dbReference type="EMBL" id="X59285">
    <property type="protein sequence ID" value="CAA41976.1"/>
    <property type="molecule type" value="mRNA"/>
</dbReference>
<dbReference type="EMBL" id="X83673">
    <property type="protein sequence ID" value="CAA58647.1"/>
    <property type="molecule type" value="Genomic_DNA"/>
</dbReference>
<dbReference type="EMBL" id="BC082205">
    <property type="protein sequence ID" value="AAH82205.1"/>
    <property type="molecule type" value="mRNA"/>
</dbReference>
<dbReference type="PIR" id="JC6173">
    <property type="entry name" value="JC6173"/>
</dbReference>
<dbReference type="RefSeq" id="NP_001095241.1">
    <molecule id="P09380-1"/>
    <property type="nucleotide sequence ID" value="NM_001101771.1"/>
</dbReference>
<dbReference type="SMR" id="P09380"/>
<dbReference type="GeneID" id="397915"/>
<dbReference type="KEGG" id="xla:397915"/>
<dbReference type="AGR" id="Xenbase:XB-GENE-6252172"/>
<dbReference type="CTD" id="397915"/>
<dbReference type="Xenbase" id="XB-GENE-6252172">
    <property type="gene designation" value="ssbp1.L"/>
</dbReference>
<dbReference type="OrthoDB" id="1078367at2759"/>
<dbReference type="Proteomes" id="UP000186698">
    <property type="component" value="Chromosome 3L"/>
</dbReference>
<dbReference type="Bgee" id="397915">
    <property type="expression patterns" value="Expressed in oocyte and 20 other cell types or tissues"/>
</dbReference>
<dbReference type="GO" id="GO:0042645">
    <property type="term" value="C:mitochondrial nucleoid"/>
    <property type="evidence" value="ECO:0000250"/>
    <property type="project" value="UniProtKB"/>
</dbReference>
<dbReference type="GO" id="GO:0005739">
    <property type="term" value="C:mitochondrion"/>
    <property type="evidence" value="ECO:0000250"/>
    <property type="project" value="UniProtKB"/>
</dbReference>
<dbReference type="GO" id="GO:0003682">
    <property type="term" value="F:chromatin binding"/>
    <property type="evidence" value="ECO:0000250"/>
    <property type="project" value="UniProtKB"/>
</dbReference>
<dbReference type="GO" id="GO:0008047">
    <property type="term" value="F:enzyme activator activity"/>
    <property type="evidence" value="ECO:0000318"/>
    <property type="project" value="GO_Central"/>
</dbReference>
<dbReference type="GO" id="GO:0003697">
    <property type="term" value="F:single-stranded DNA binding"/>
    <property type="evidence" value="ECO:0000250"/>
    <property type="project" value="UniProtKB"/>
</dbReference>
<dbReference type="GO" id="GO:0006260">
    <property type="term" value="P:DNA replication"/>
    <property type="evidence" value="ECO:0000318"/>
    <property type="project" value="GO_Central"/>
</dbReference>
<dbReference type="GO" id="GO:0006264">
    <property type="term" value="P:mitochondrial DNA replication"/>
    <property type="evidence" value="ECO:0007669"/>
    <property type="project" value="TreeGrafter"/>
</dbReference>
<dbReference type="GO" id="GO:0000002">
    <property type="term" value="P:mitochondrial genome maintenance"/>
    <property type="evidence" value="ECO:0000318"/>
    <property type="project" value="GO_Central"/>
</dbReference>
<dbReference type="GO" id="GO:0090297">
    <property type="term" value="P:positive regulation of mitochondrial DNA replication"/>
    <property type="evidence" value="ECO:0000250"/>
    <property type="project" value="UniProtKB"/>
</dbReference>
<dbReference type="GO" id="GO:0051289">
    <property type="term" value="P:protein homotetramerization"/>
    <property type="evidence" value="ECO:0000250"/>
    <property type="project" value="UniProtKB"/>
</dbReference>
<dbReference type="CDD" id="cd04496">
    <property type="entry name" value="SSB_OBF"/>
    <property type="match status" value="1"/>
</dbReference>
<dbReference type="FunFam" id="2.40.50.140:FF:000129">
    <property type="entry name" value="Single-stranded DNA-binding protein 1, mitochondrial"/>
    <property type="match status" value="1"/>
</dbReference>
<dbReference type="Gene3D" id="2.40.50.140">
    <property type="entry name" value="Nucleic acid-binding proteins"/>
    <property type="match status" value="1"/>
</dbReference>
<dbReference type="HAMAP" id="MF_00984">
    <property type="entry name" value="SSB"/>
    <property type="match status" value="1"/>
</dbReference>
<dbReference type="InterPro" id="IPR012340">
    <property type="entry name" value="NA-bd_OB-fold"/>
</dbReference>
<dbReference type="InterPro" id="IPR000424">
    <property type="entry name" value="Primosome_PriB/ssb"/>
</dbReference>
<dbReference type="InterPro" id="IPR011344">
    <property type="entry name" value="ssDNA-bd"/>
</dbReference>
<dbReference type="NCBIfam" id="TIGR00621">
    <property type="entry name" value="ssb"/>
    <property type="match status" value="1"/>
</dbReference>
<dbReference type="PANTHER" id="PTHR10302">
    <property type="entry name" value="SINGLE-STRANDED DNA-BINDING PROTEIN"/>
    <property type="match status" value="1"/>
</dbReference>
<dbReference type="PANTHER" id="PTHR10302:SF0">
    <property type="entry name" value="SINGLE-STRANDED DNA-BINDING PROTEIN, MITOCHONDRIAL"/>
    <property type="match status" value="1"/>
</dbReference>
<dbReference type="Pfam" id="PF00436">
    <property type="entry name" value="SSB"/>
    <property type="match status" value="1"/>
</dbReference>
<dbReference type="PIRSF" id="PIRSF002070">
    <property type="entry name" value="SSB"/>
    <property type="match status" value="1"/>
</dbReference>
<dbReference type="SUPFAM" id="SSF50249">
    <property type="entry name" value="Nucleic acid-binding proteins"/>
    <property type="match status" value="1"/>
</dbReference>
<dbReference type="PROSITE" id="PS50935">
    <property type="entry name" value="SSB"/>
    <property type="match status" value="1"/>
</dbReference>
<feature type="transit peptide" description="Mitochondrion" evidence="2 3">
    <location>
        <begin position="1"/>
        <end position="17"/>
    </location>
</feature>
<feature type="chain" id="PRO_0000033266" description="Single-stranded DNA-binding protein 1-A, mitochondrial">
    <location>
        <begin position="18"/>
        <end position="146"/>
    </location>
</feature>
<feature type="domain" description="SSB">
    <location>
        <begin position="28"/>
        <end position="140"/>
    </location>
</feature>
<feature type="splice variant" id="VSP_036485" description="In isoform 2." evidence="5">
    <original>G</original>
    <variation>GAPEWNPVCPPPNSSPAVGPLALLASRRVSR</variation>
    <location>
        <position position="104"/>
    </location>
</feature>
<accession>P09380</accession>
<accession>Q66GV9</accession>
<name>SSBPA_XENLA</name>
<proteinExistence type="evidence at protein level"/>
<organism>
    <name type="scientific">Xenopus laevis</name>
    <name type="common">African clawed frog</name>
    <dbReference type="NCBI Taxonomy" id="8355"/>
    <lineage>
        <taxon>Eukaryota</taxon>
        <taxon>Metazoa</taxon>
        <taxon>Chordata</taxon>
        <taxon>Craniata</taxon>
        <taxon>Vertebrata</taxon>
        <taxon>Euteleostomi</taxon>
        <taxon>Amphibia</taxon>
        <taxon>Batrachia</taxon>
        <taxon>Anura</taxon>
        <taxon>Pipoidea</taxon>
        <taxon>Pipidae</taxon>
        <taxon>Xenopodinae</taxon>
        <taxon>Xenopus</taxon>
        <taxon>Xenopus</taxon>
    </lineage>
</organism>
<reference key="1">
    <citation type="journal article" date="1991" name="Nucleic Acids Res.">
        <title>A full-length cDNA encoding a mitochondrial DNA-specific single-stranded DNA binding protein from Xenopus laevis.</title>
        <authorList>
            <person name="Tiranti V."/>
            <person name="Barat-Gueride M."/>
            <person name="Bijl J."/>
            <person name="Didonato S."/>
            <person name="Zeviani M."/>
        </authorList>
    </citation>
    <scope>NUCLEOTIDE SEQUENCE [MRNA] (ISOFORM 1)</scope>
    <source>
        <tissue>Ovary</tissue>
    </source>
</reference>
<reference key="2">
    <citation type="journal article" date="1997" name="Gene">
        <title>Cloning, sequencing and expression of the two genes encoding the mitochondrial single-stranded DNA-binding protein in Xenopus laevis.</title>
        <authorList>
            <person name="Champagne A.M."/>
            <person name="Dufresne C."/>
            <person name="Viney L."/>
            <person name="Gueride M."/>
        </authorList>
    </citation>
    <scope>NUCLEOTIDE SEQUENCE [GENOMIC DNA]</scope>
    <scope>DEVELOPMENTAL STAGE</scope>
</reference>
<reference key="3">
    <citation type="submission" date="2004-09" db="EMBL/GenBank/DDBJ databases">
        <authorList>
            <consortium name="NIH - Xenopus Gene Collection (XGC) project"/>
        </authorList>
    </citation>
    <scope>NUCLEOTIDE SEQUENCE [LARGE SCALE MRNA] (ISOFORM 2)</scope>
    <source>
        <tissue>Testis</tissue>
    </source>
</reference>
<reference key="4">
    <citation type="journal article" date="1991" name="Arch. Biochem. Biophys.">
        <title>Primary structure of the two variants of Xenopus laevis mtSSB, a mitochondrial DNA binding protein.</title>
        <authorList>
            <person name="Ghrir R."/>
            <person name="Lecaer J.-P."/>
            <person name="Dufresne C."/>
            <person name="Barat-Gueride M."/>
        </authorList>
    </citation>
    <scope>PROTEIN SEQUENCE OF 18-142</scope>
</reference>
<reference key="5">
    <citation type="journal article" date="1988" name="FEBS Lett.">
        <title>The amino-terminal sequence of the Xenopus laevis mitochondrial SSB is homologous to that of the Escherichia coli protein.</title>
        <authorList>
            <person name="Mahoungou C."/>
            <person name="Ghrir R."/>
            <person name="Lecaer J.-P."/>
            <person name="Mignotte B."/>
            <person name="Barat-Gueride M."/>
        </authorList>
    </citation>
    <scope>PROTEIN SEQUENCE OF 18-41</scope>
</reference>
<comment type="function">
    <text evidence="1">Binds preferentially and cooperatively to pyrimidine rich single-stranded DNA (ss-DNA). Required to maintain the copy number of mitochondrial DNA (mtDNA) and plays crucial roles during mtDNA replication that stimulate activity of the DNA polymerase at the replication fork. May also function in mtDNA repair.</text>
</comment>
<comment type="subunit">
    <text evidence="6">Homotetramer.</text>
</comment>
<comment type="subcellular location">
    <subcellularLocation>
        <location evidence="1">Mitochondrion</location>
    </subcellularLocation>
    <subcellularLocation>
        <location evidence="1">Mitochondrion matrix</location>
        <location evidence="1">Mitochondrion nucleoid</location>
    </subcellularLocation>
</comment>
<comment type="alternative products">
    <event type="alternative splicing"/>
    <isoform>
        <id>P09380-1</id>
        <name>1</name>
        <sequence type="displayed"/>
    </isoform>
    <isoform>
        <id>P09380-2</id>
        <name>2</name>
        <sequence type="described" ref="VSP_036485"/>
    </isoform>
</comment>
<comment type="developmental stage">
    <text evidence="4">In oogenesis, expression is higher in previtellogenic oocytes.</text>
</comment>
<protein>
    <recommendedName>
        <fullName>Single-stranded DNA-binding protein 1-A, mitochondrial</fullName>
    </recommendedName>
    <alternativeName>
        <fullName>Single-stranded DNA-binding protein 1, mitochondrial</fullName>
        <shortName>MtSSB-1</shortName>
        <shortName>XlSSB1</shortName>
    </alternativeName>
    <alternativeName>
        <fullName>Single-stranded DNA-binding protein S, mitochondrial</fullName>
        <shortName>MtSSBs</shortName>
        <shortName>xl-mtssb</shortName>
    </alternativeName>
</protein>
<keyword id="KW-0025">Alternative splicing</keyword>
<keyword id="KW-0903">Direct protein sequencing</keyword>
<keyword id="KW-0235">DNA replication</keyword>
<keyword id="KW-0238">DNA-binding</keyword>
<keyword id="KW-0496">Mitochondrion</keyword>
<keyword id="KW-1135">Mitochondrion nucleoid</keyword>
<keyword id="KW-1185">Reference proteome</keyword>
<keyword id="KW-0809">Transit peptide</keyword>
<gene>
    <name type="primary">ssbp1-a</name>
    <name type="synonym">mtssb</name>
    <name type="synonym">mtssb1</name>
</gene>
<sequence length="146" mass="16743">MFHRPALQVFRQFARCQSTDSVILERSINKVQLLGRVGQDPVMRQAEGKNPVTIFSLATNELWRSGESETFHTAGDVNQKTTWHRISVFRPGLRDVAYQHVKKGARLLVEGKIDYGEYTDKNNVRRQATTIIADNIIFLSDLRDKL</sequence>